<organism>
    <name type="scientific">Methanothermobacter thermautotrophicus (strain ATCC 29096 / DSM 1053 / JCM 10044 / NBRC 100330 / Delta H)</name>
    <name type="common">Methanobacterium thermoautotrophicum</name>
    <dbReference type="NCBI Taxonomy" id="187420"/>
    <lineage>
        <taxon>Archaea</taxon>
        <taxon>Methanobacteriati</taxon>
        <taxon>Methanobacteriota</taxon>
        <taxon>Methanomada group</taxon>
        <taxon>Methanobacteria</taxon>
        <taxon>Methanobacteriales</taxon>
        <taxon>Methanobacteriaceae</taxon>
        <taxon>Methanothermobacter</taxon>
    </lineage>
</organism>
<protein>
    <recommendedName>
        <fullName evidence="1">UvrABC system protein A</fullName>
        <shortName evidence="1">UvrA protein</shortName>
    </recommendedName>
    <alternativeName>
        <fullName evidence="1">Excinuclease ABC subunit A</fullName>
    </alternativeName>
</protein>
<feature type="chain" id="PRO_0000093122" description="UvrABC system protein A">
    <location>
        <begin position="1"/>
        <end position="962"/>
    </location>
</feature>
<feature type="domain" description="ABC transporter 1" evidence="1">
    <location>
        <begin position="319"/>
        <end position="597"/>
    </location>
</feature>
<feature type="domain" description="ABC transporter 2" evidence="1">
    <location>
        <begin position="617"/>
        <end position="944"/>
    </location>
</feature>
<feature type="zinc finger region" description="C4-type" evidence="1">
    <location>
        <begin position="748"/>
        <end position="774"/>
    </location>
</feature>
<feature type="binding site" evidence="1">
    <location>
        <begin position="38"/>
        <end position="45"/>
    </location>
    <ligand>
        <name>ATP</name>
        <dbReference type="ChEBI" id="CHEBI:30616"/>
    </ligand>
</feature>
<feature type="binding site" evidence="1">
    <location>
        <begin position="649"/>
        <end position="656"/>
    </location>
    <ligand>
        <name>ATP</name>
        <dbReference type="ChEBI" id="CHEBI:30616"/>
    </ligand>
</feature>
<sequence length="962" mass="108396">METLRIMSGKIVIKGAREHNLQNVDLELPRDKFIVITGISGSGKSSLAFDTIYAEGQRRYVESLSAYARQFLGQMKKPEMDYIEGLSPAISIDQKTTRVNPRSTVGTITEIYDYLRLLFARIGKPHCYLCGREIEQQTSTQIVDRIMDDGEGERIIILAPVVRDRKGEHQRVFERLREQGFVRVRVDGEIHDLEDEFDLDRNRKHSIDVVVDRLVVRRDTEFRKRLADSVETALQLGEGTVRVPSTMTPGEERIYSEHFACPGTAGINFEEISPRMFSFNSPHGACPECNGLGSKLEIDPDLVVPYPERSINEGAIVPWSKSGKRDNYYHQMLRAVAEHYGFSLDTPFRDLDEEHRRAILYGTDEKIQFVFQRKNRTYRVNRRFEGVIPRMERIYMETKSNYMRTYIGRFMSNHACPVCGGSRLRPESLSVTINGRSIHDVVEMSIREAHEFFDSLKLTEREEYIAREVLKEIRERLRFLIDVGLDYLTLSRSSGTLSGGEAQRIRLATQIGSGLVGVLYILDEPSIGLHQRDNRRLIETLKRLRDLGNTLIVVEHDEETILSADHVVDIGPGAGEHGGCVVAEGTPEEIMEDPDSLTGAYLSGRETIPLPEVRRRPSGRYLTVRGAAENNLREIDVRIPLGLFTCVTGVSGSGKSTLVNDILYRGVYERLNHKHMNAGRHTDIEGLQHIDKVVMIDQSPIGRTPRSNPATYTGVFTHIRELFAQTPEARKRGYRPGRFSFNVKGGRCEACGGDGIIKIEMHFLADVYVPCEVCRGRRYNEETLEIRYRGRNIAEVLDMTVEEALEFFENIPQVRRKLQTLYDVGLGYIKLGQPATTLSGGEAQRVKLAKELSRRSTGSTLYILDEPTTGLHFDDIKKLLNVLGRLVDAGNTAVVIEHNLDVIKSADHIIDLGPEGGERGGLVVAEGTPEEVAASGTHTGRFLREVLADERSQKVPVGQDTG</sequence>
<accession>O26543</accession>
<gene>
    <name evidence="1" type="primary">uvrA</name>
    <name type="ordered locus">MTH_443</name>
</gene>
<reference key="1">
    <citation type="journal article" date="1997" name="J. Bacteriol.">
        <title>Complete genome sequence of Methanobacterium thermoautotrophicum deltaH: functional analysis and comparative genomics.</title>
        <authorList>
            <person name="Smith D.R."/>
            <person name="Doucette-Stamm L.A."/>
            <person name="Deloughery C."/>
            <person name="Lee H.-M."/>
            <person name="Dubois J."/>
            <person name="Aldredge T."/>
            <person name="Bashirzadeh R."/>
            <person name="Blakely D."/>
            <person name="Cook R."/>
            <person name="Gilbert K."/>
            <person name="Harrison D."/>
            <person name="Hoang L."/>
            <person name="Keagle P."/>
            <person name="Lumm W."/>
            <person name="Pothier B."/>
            <person name="Qiu D."/>
            <person name="Spadafora R."/>
            <person name="Vicare R."/>
            <person name="Wang Y."/>
            <person name="Wierzbowski J."/>
            <person name="Gibson R."/>
            <person name="Jiwani N."/>
            <person name="Caruso A."/>
            <person name="Bush D."/>
            <person name="Safer H."/>
            <person name="Patwell D."/>
            <person name="Prabhakar S."/>
            <person name="McDougall S."/>
            <person name="Shimer G."/>
            <person name="Goyal A."/>
            <person name="Pietrovski S."/>
            <person name="Church G.M."/>
            <person name="Daniels C.J."/>
            <person name="Mao J.-I."/>
            <person name="Rice P."/>
            <person name="Noelling J."/>
            <person name="Reeve J.N."/>
        </authorList>
    </citation>
    <scope>NUCLEOTIDE SEQUENCE [LARGE SCALE GENOMIC DNA]</scope>
    <source>
        <strain>ATCC 29096 / DSM 1053 / JCM 10044 / NBRC 100330 / Delta H</strain>
    </source>
</reference>
<comment type="function">
    <text evidence="1">The UvrABC repair system catalyzes the recognition and processing of DNA lesions. UvrA is an ATPase and a DNA-binding protein. A damage recognition complex composed of 2 UvrA and 2 UvrB subunits scans DNA for abnormalities. When the presence of a lesion has been verified by UvrB, the UvrA molecules dissociate.</text>
</comment>
<comment type="subunit">
    <text evidence="1">Forms a heterotetramer with UvrB during the search for lesions.</text>
</comment>
<comment type="subcellular location">
    <subcellularLocation>
        <location evidence="1">Cytoplasm</location>
    </subcellularLocation>
</comment>
<comment type="similarity">
    <text evidence="1">Belongs to the ABC transporter superfamily. UvrA family.</text>
</comment>
<name>UVRA_METTH</name>
<proteinExistence type="inferred from homology"/>
<dbReference type="EMBL" id="AE000666">
    <property type="protein sequence ID" value="AAB84949.1"/>
    <property type="molecule type" value="Genomic_DNA"/>
</dbReference>
<dbReference type="PIR" id="H69157">
    <property type="entry name" value="H69157"/>
</dbReference>
<dbReference type="SMR" id="O26543"/>
<dbReference type="STRING" id="187420.MTH_443"/>
<dbReference type="PaxDb" id="187420-MTH_443"/>
<dbReference type="EnsemblBacteria" id="AAB84949">
    <property type="protein sequence ID" value="AAB84949"/>
    <property type="gene ID" value="MTH_443"/>
</dbReference>
<dbReference type="KEGG" id="mth:MTH_443"/>
<dbReference type="PATRIC" id="fig|187420.15.peg.413"/>
<dbReference type="HOGENOM" id="CLU_001370_0_2_2"/>
<dbReference type="InParanoid" id="O26543"/>
<dbReference type="Proteomes" id="UP000005223">
    <property type="component" value="Chromosome"/>
</dbReference>
<dbReference type="GO" id="GO:0005737">
    <property type="term" value="C:cytoplasm"/>
    <property type="evidence" value="ECO:0007669"/>
    <property type="project" value="UniProtKB-SubCell"/>
</dbReference>
<dbReference type="GO" id="GO:0009380">
    <property type="term" value="C:excinuclease repair complex"/>
    <property type="evidence" value="ECO:0007669"/>
    <property type="project" value="InterPro"/>
</dbReference>
<dbReference type="GO" id="GO:0005524">
    <property type="term" value="F:ATP binding"/>
    <property type="evidence" value="ECO:0007669"/>
    <property type="project" value="UniProtKB-UniRule"/>
</dbReference>
<dbReference type="GO" id="GO:0016887">
    <property type="term" value="F:ATP hydrolysis activity"/>
    <property type="evidence" value="ECO:0007669"/>
    <property type="project" value="InterPro"/>
</dbReference>
<dbReference type="GO" id="GO:0003677">
    <property type="term" value="F:DNA binding"/>
    <property type="evidence" value="ECO:0007669"/>
    <property type="project" value="UniProtKB-UniRule"/>
</dbReference>
<dbReference type="GO" id="GO:0009381">
    <property type="term" value="F:excinuclease ABC activity"/>
    <property type="evidence" value="ECO:0007669"/>
    <property type="project" value="UniProtKB-UniRule"/>
</dbReference>
<dbReference type="GO" id="GO:0008270">
    <property type="term" value="F:zinc ion binding"/>
    <property type="evidence" value="ECO:0007669"/>
    <property type="project" value="UniProtKB-UniRule"/>
</dbReference>
<dbReference type="GO" id="GO:0006289">
    <property type="term" value="P:nucleotide-excision repair"/>
    <property type="evidence" value="ECO:0007669"/>
    <property type="project" value="UniProtKB-UniRule"/>
</dbReference>
<dbReference type="GO" id="GO:0009432">
    <property type="term" value="P:SOS response"/>
    <property type="evidence" value="ECO:0007669"/>
    <property type="project" value="UniProtKB-UniRule"/>
</dbReference>
<dbReference type="CDD" id="cd03270">
    <property type="entry name" value="ABC_UvrA_I"/>
    <property type="match status" value="1"/>
</dbReference>
<dbReference type="CDD" id="cd03271">
    <property type="entry name" value="ABC_UvrA_II"/>
    <property type="match status" value="1"/>
</dbReference>
<dbReference type="FunFam" id="1.20.1580.10:FF:000002">
    <property type="entry name" value="UvrABC system protein A"/>
    <property type="match status" value="1"/>
</dbReference>
<dbReference type="Gene3D" id="1.10.8.280">
    <property type="entry name" value="ABC transporter ATPase domain-like"/>
    <property type="match status" value="1"/>
</dbReference>
<dbReference type="Gene3D" id="1.20.1580.10">
    <property type="entry name" value="ABC transporter ATPase like domain"/>
    <property type="match status" value="2"/>
</dbReference>
<dbReference type="Gene3D" id="3.30.1490.20">
    <property type="entry name" value="ATP-grasp fold, A domain"/>
    <property type="match status" value="1"/>
</dbReference>
<dbReference type="Gene3D" id="3.40.50.300">
    <property type="entry name" value="P-loop containing nucleotide triphosphate hydrolases"/>
    <property type="match status" value="2"/>
</dbReference>
<dbReference type="HAMAP" id="MF_00205">
    <property type="entry name" value="UvrA"/>
    <property type="match status" value="1"/>
</dbReference>
<dbReference type="InterPro" id="IPR003593">
    <property type="entry name" value="AAA+_ATPase"/>
</dbReference>
<dbReference type="InterPro" id="IPR003439">
    <property type="entry name" value="ABC_transporter-like_ATP-bd"/>
</dbReference>
<dbReference type="InterPro" id="IPR017871">
    <property type="entry name" value="ABC_transporter-like_CS"/>
</dbReference>
<dbReference type="InterPro" id="IPR013815">
    <property type="entry name" value="ATP_grasp_subdomain_1"/>
</dbReference>
<dbReference type="InterPro" id="IPR027417">
    <property type="entry name" value="P-loop_NTPase"/>
</dbReference>
<dbReference type="InterPro" id="IPR004602">
    <property type="entry name" value="UvrA"/>
</dbReference>
<dbReference type="InterPro" id="IPR041552">
    <property type="entry name" value="UvrA_DNA-bd"/>
</dbReference>
<dbReference type="InterPro" id="IPR041102">
    <property type="entry name" value="UvrA_inter"/>
</dbReference>
<dbReference type="NCBIfam" id="NF001503">
    <property type="entry name" value="PRK00349.1"/>
    <property type="match status" value="1"/>
</dbReference>
<dbReference type="NCBIfam" id="TIGR00630">
    <property type="entry name" value="uvra"/>
    <property type="match status" value="1"/>
</dbReference>
<dbReference type="PANTHER" id="PTHR43152">
    <property type="entry name" value="UVRABC SYSTEM PROTEIN A"/>
    <property type="match status" value="1"/>
</dbReference>
<dbReference type="PANTHER" id="PTHR43152:SF3">
    <property type="entry name" value="UVRABC SYSTEM PROTEIN A"/>
    <property type="match status" value="1"/>
</dbReference>
<dbReference type="Pfam" id="PF17755">
    <property type="entry name" value="UvrA_DNA-bind"/>
    <property type="match status" value="1"/>
</dbReference>
<dbReference type="Pfam" id="PF17760">
    <property type="entry name" value="UvrA_inter"/>
    <property type="match status" value="1"/>
</dbReference>
<dbReference type="SMART" id="SM00382">
    <property type="entry name" value="AAA"/>
    <property type="match status" value="2"/>
</dbReference>
<dbReference type="SUPFAM" id="SSF52540">
    <property type="entry name" value="P-loop containing nucleoside triphosphate hydrolases"/>
    <property type="match status" value="2"/>
</dbReference>
<dbReference type="PROSITE" id="PS00211">
    <property type="entry name" value="ABC_TRANSPORTER_1"/>
    <property type="match status" value="2"/>
</dbReference>
<dbReference type="PROSITE" id="PS50893">
    <property type="entry name" value="ABC_TRANSPORTER_2"/>
    <property type="match status" value="2"/>
</dbReference>
<keyword id="KW-0067">ATP-binding</keyword>
<keyword id="KW-0963">Cytoplasm</keyword>
<keyword id="KW-0227">DNA damage</keyword>
<keyword id="KW-0228">DNA excision</keyword>
<keyword id="KW-0234">DNA repair</keyword>
<keyword id="KW-0238">DNA-binding</keyword>
<keyword id="KW-0267">Excision nuclease</keyword>
<keyword id="KW-0479">Metal-binding</keyword>
<keyword id="KW-0547">Nucleotide-binding</keyword>
<keyword id="KW-1185">Reference proteome</keyword>
<keyword id="KW-0677">Repeat</keyword>
<keyword id="KW-0742">SOS response</keyword>
<keyword id="KW-0862">Zinc</keyword>
<keyword id="KW-0863">Zinc-finger</keyword>
<evidence type="ECO:0000255" key="1">
    <source>
        <dbReference type="HAMAP-Rule" id="MF_00205"/>
    </source>
</evidence>